<keyword id="KW-0002">3D-structure</keyword>
<keyword id="KW-0044">Antibiotic</keyword>
<keyword id="KW-0929">Antimicrobial</keyword>
<keyword id="KW-1015">Disulfide bond</keyword>
<keyword id="KW-0255">Endonuclease</keyword>
<keyword id="KW-0325">Glycoprotein</keyword>
<keyword id="KW-0378">Hydrolase</keyword>
<keyword id="KW-0458">Lysosome</keyword>
<keyword id="KW-0540">Nuclease</keyword>
<keyword id="KW-1267">Proteomics identification</keyword>
<keyword id="KW-1185">Reference proteome</keyword>
<keyword id="KW-0964">Secreted</keyword>
<keyword id="KW-0732">Signal</keyword>
<gene>
    <name type="primary">RNASE6</name>
    <name type="synonym">RNS6</name>
</gene>
<name>RNAS6_HUMAN</name>
<feature type="signal peptide" evidence="2">
    <location>
        <begin position="1"/>
        <end position="23"/>
    </location>
</feature>
<feature type="chain" id="PRO_0000030892" description="Ribonuclease K6">
    <location>
        <begin position="24"/>
        <end position="150"/>
    </location>
</feature>
<feature type="active site" description="Proton acceptor" evidence="3">
    <location>
        <position position="38"/>
    </location>
</feature>
<feature type="active site" description="Proton donor" evidence="3">
    <location>
        <position position="145"/>
    </location>
</feature>
<feature type="binding site" evidence="1">
    <location>
        <begin position="61"/>
        <end position="65"/>
    </location>
    <ligand>
        <name>substrate</name>
    </ligand>
</feature>
<feature type="binding site" evidence="1">
    <location>
        <position position="86"/>
    </location>
    <ligand>
        <name>substrate</name>
    </ligand>
</feature>
<feature type="binding site" evidence="1">
    <location>
        <position position="105"/>
    </location>
    <ligand>
        <name>substrate</name>
    </ligand>
</feature>
<feature type="site" description="Important for bactericidal activity, bacterial agglutination activity and binding to bacterial lipopolysaccharide (LPS)" evidence="8">
    <location>
        <position position="24"/>
    </location>
</feature>
<feature type="site" description="Important for bactericidal activity, bacterial agglutination activity and binding to bacterial lipopolysaccharide (LPS)" evidence="8">
    <location>
        <position position="36"/>
    </location>
</feature>
<feature type="site" description="Facilitates cleavage of polynucleotide substrates" evidence="7">
    <location>
        <position position="59"/>
    </location>
</feature>
<feature type="site" description="Critical for catalytic activity" evidence="4">
    <location>
        <position position="61"/>
    </location>
</feature>
<feature type="glycosylation site" description="N-linked (GlcNAc...) asparagine" evidence="5">
    <location>
        <position position="55"/>
    </location>
</feature>
<feature type="glycosylation site" description="N-linked (GlcNAc...) asparagine" evidence="5">
    <location>
        <position position="100"/>
    </location>
</feature>
<feature type="disulfide bond" evidence="12">
    <location>
        <begin position="46"/>
        <end position="104"/>
    </location>
</feature>
<feature type="disulfide bond" evidence="12">
    <location>
        <begin position="60"/>
        <end position="114"/>
    </location>
</feature>
<feature type="disulfide bond" evidence="12">
    <location>
        <begin position="78"/>
        <end position="129"/>
    </location>
</feature>
<feature type="disulfide bond" evidence="12">
    <location>
        <begin position="85"/>
        <end position="92"/>
    </location>
</feature>
<feature type="sequence variant" id="VAR_012048" description="In dbSNP:rs1045922.">
    <original>R</original>
    <variation>Q</variation>
    <location>
        <position position="89"/>
    </location>
</feature>
<feature type="mutagenesis site" description="Moderately impairs bactericidal activity, bacterial agglutination activity and binding to bacterial lipopolysaccharide (LPS)." evidence="8">
    <original>W</original>
    <variation>A</variation>
    <location>
        <position position="24"/>
    </location>
</feature>
<feature type="mutagenesis site" description="Strongly impairs bactericidal activity, bacterial agglutination activity and binding to bacterial lipopolysaccharide (LPS)." evidence="8">
    <original>I</original>
    <variation>A</variation>
    <location>
        <position position="36"/>
    </location>
</feature>
<feature type="mutagenesis site" description="Significantly reduced activity towards dinucleotides UpA and CpA. Slightly reduced activity towards polymeric substrates poly(U) and poly(U):poly(A). No effect on bactericidal activity. Significantly reduced activity towards poly(U) and poly(U):poly(A); when associated with R-59." evidence="7 8">
    <original>H</original>
    <variation>A</variation>
    <location>
        <position position="38"/>
    </location>
</feature>
<feature type="mutagenesis site" description="No significant effect on activity towards dinucleotides UpA and CpA. Reduced activity towards polymeric substrates poly(U) and poly(U):poly(A). Significantly reduced activity towards poly(U) and poly(U):poly(A); when associated with A-38." evidence="7">
    <original>H</original>
    <variation>R</variation>
    <location>
        <position position="59"/>
    </location>
</feature>
<feature type="helix" evidence="13">
    <location>
        <begin position="30"/>
        <end position="38"/>
    </location>
</feature>
<feature type="helix" evidence="13">
    <location>
        <begin position="46"/>
        <end position="57"/>
    </location>
</feature>
<feature type="strand" evidence="13">
    <location>
        <begin position="62"/>
        <end position="67"/>
    </location>
</feature>
<feature type="helix" evidence="13">
    <location>
        <begin position="71"/>
        <end position="77"/>
    </location>
</feature>
<feature type="strand" evidence="13">
    <location>
        <begin position="92"/>
        <end position="94"/>
    </location>
</feature>
<feature type="strand" evidence="13">
    <location>
        <begin position="99"/>
        <end position="108"/>
    </location>
</feature>
<feature type="strand" evidence="13">
    <location>
        <begin position="115"/>
        <end position="130"/>
    </location>
</feature>
<feature type="strand" evidence="13">
    <location>
        <begin position="142"/>
        <end position="150"/>
    </location>
</feature>
<dbReference type="EC" id="3.1.27.-" evidence="7 9"/>
<dbReference type="EMBL" id="U64998">
    <property type="protein sequence ID" value="AAC51848.1"/>
    <property type="molecule type" value="Genomic_DNA"/>
</dbReference>
<dbReference type="EMBL" id="BC020848">
    <property type="protein sequence ID" value="AAH20848.1"/>
    <property type="molecule type" value="mRNA"/>
</dbReference>
<dbReference type="CCDS" id="CCDS9558.1"/>
<dbReference type="PIR" id="S72361">
    <property type="entry name" value="S72361"/>
</dbReference>
<dbReference type="RefSeq" id="NP_005606.1">
    <property type="nucleotide sequence ID" value="NM_005615.5"/>
</dbReference>
<dbReference type="RefSeq" id="XP_016877055.1">
    <property type="nucleotide sequence ID" value="XM_017021566.2"/>
</dbReference>
<dbReference type="RefSeq" id="XP_016877056.1">
    <property type="nucleotide sequence ID" value="XM_017021567.1"/>
</dbReference>
<dbReference type="RefSeq" id="XP_054232514.1">
    <property type="nucleotide sequence ID" value="XM_054376539.1"/>
</dbReference>
<dbReference type="RefSeq" id="XP_054232515.1">
    <property type="nucleotide sequence ID" value="XM_054376540.1"/>
</dbReference>
<dbReference type="PDB" id="4X09">
    <property type="method" value="X-ray"/>
    <property type="resolution" value="1.72 A"/>
    <property type="chains" value="A=24-150"/>
</dbReference>
<dbReference type="PDB" id="5OAB">
    <property type="method" value="X-ray"/>
    <property type="resolution" value="1.11 A"/>
    <property type="chains" value="A=24-150"/>
</dbReference>
<dbReference type="PDB" id="6ENP">
    <property type="method" value="X-ray"/>
    <property type="resolution" value="1.04 A"/>
    <property type="chains" value="A=24-150"/>
</dbReference>
<dbReference type="PDB" id="6MV6">
    <property type="method" value="X-ray"/>
    <property type="resolution" value="1.50 A"/>
    <property type="chains" value="A=26-150"/>
</dbReference>
<dbReference type="PDB" id="6MV7">
    <property type="method" value="X-ray"/>
    <property type="resolution" value="2.59 A"/>
    <property type="chains" value="A=24-150"/>
</dbReference>
<dbReference type="PDBsum" id="4X09"/>
<dbReference type="PDBsum" id="5OAB"/>
<dbReference type="PDBsum" id="6ENP"/>
<dbReference type="PDBsum" id="6MV6"/>
<dbReference type="PDBsum" id="6MV7"/>
<dbReference type="BMRB" id="Q93091"/>
<dbReference type="SMR" id="Q93091"/>
<dbReference type="BioGRID" id="111968">
    <property type="interactions" value="1"/>
</dbReference>
<dbReference type="FunCoup" id="Q93091">
    <property type="interactions" value="53"/>
</dbReference>
<dbReference type="IntAct" id="Q93091">
    <property type="interactions" value="1"/>
</dbReference>
<dbReference type="STRING" id="9606.ENSP00000302046"/>
<dbReference type="GlyCosmos" id="Q93091">
    <property type="glycosylation" value="2 sites, No reported glycans"/>
</dbReference>
<dbReference type="GlyGen" id="Q93091">
    <property type="glycosylation" value="2 sites, 9 N-linked glycans (1 site)"/>
</dbReference>
<dbReference type="iPTMnet" id="Q93091"/>
<dbReference type="BioMuta" id="RNASE6"/>
<dbReference type="DMDM" id="3123285"/>
<dbReference type="MassIVE" id="Q93091"/>
<dbReference type="PaxDb" id="9606-ENSP00000302046"/>
<dbReference type="PeptideAtlas" id="Q93091"/>
<dbReference type="ProteomicsDB" id="75720"/>
<dbReference type="Antibodypedia" id="3">
    <property type="antibodies" value="64 antibodies from 18 providers"/>
</dbReference>
<dbReference type="DNASU" id="6039"/>
<dbReference type="Ensembl" id="ENST00000304677.3">
    <property type="protein sequence ID" value="ENSP00000302046.2"/>
    <property type="gene ID" value="ENSG00000169413.3"/>
</dbReference>
<dbReference type="GeneID" id="6039"/>
<dbReference type="KEGG" id="hsa:6039"/>
<dbReference type="MANE-Select" id="ENST00000304677.3">
    <property type="protein sequence ID" value="ENSP00000302046.2"/>
    <property type="RefSeq nucleotide sequence ID" value="NM_005615.5"/>
    <property type="RefSeq protein sequence ID" value="NP_005606.1"/>
</dbReference>
<dbReference type="UCSC" id="uc001vye.4">
    <property type="organism name" value="human"/>
</dbReference>
<dbReference type="AGR" id="HGNC:10048"/>
<dbReference type="CTD" id="6039"/>
<dbReference type="DisGeNET" id="6039"/>
<dbReference type="GeneCards" id="RNASE6"/>
<dbReference type="HGNC" id="HGNC:10048">
    <property type="gene designation" value="RNASE6"/>
</dbReference>
<dbReference type="HPA" id="ENSG00000169413">
    <property type="expression patterns" value="Tissue enhanced (lymphoid)"/>
</dbReference>
<dbReference type="MIM" id="601981">
    <property type="type" value="gene"/>
</dbReference>
<dbReference type="neXtProt" id="NX_Q93091"/>
<dbReference type="OpenTargets" id="ENSG00000169413"/>
<dbReference type="PharmGKB" id="PA34416"/>
<dbReference type="VEuPathDB" id="HostDB:ENSG00000169413"/>
<dbReference type="eggNOG" id="ENOG502TDZ3">
    <property type="taxonomic scope" value="Eukaryota"/>
</dbReference>
<dbReference type="GeneTree" id="ENSGT00940000161733"/>
<dbReference type="HOGENOM" id="CLU_117006_0_1_1"/>
<dbReference type="InParanoid" id="Q93091"/>
<dbReference type="OMA" id="LTKAHWF"/>
<dbReference type="OrthoDB" id="9445034at2759"/>
<dbReference type="PAN-GO" id="Q93091">
    <property type="GO annotations" value="7 GO annotations based on evolutionary models"/>
</dbReference>
<dbReference type="PhylomeDB" id="Q93091"/>
<dbReference type="TreeFam" id="TF333393"/>
<dbReference type="PathwayCommons" id="Q93091"/>
<dbReference type="Reactome" id="R-HSA-6803157">
    <property type="pathway name" value="Antimicrobial peptides"/>
</dbReference>
<dbReference type="SignaLink" id="Q93091"/>
<dbReference type="BioGRID-ORCS" id="6039">
    <property type="hits" value="10 hits in 1145 CRISPR screens"/>
</dbReference>
<dbReference type="GenomeRNAi" id="6039"/>
<dbReference type="Pharos" id="Q93091">
    <property type="development level" value="Tbio"/>
</dbReference>
<dbReference type="PRO" id="PR:Q93091"/>
<dbReference type="Proteomes" id="UP000005640">
    <property type="component" value="Chromosome 14"/>
</dbReference>
<dbReference type="RNAct" id="Q93091">
    <property type="molecule type" value="protein"/>
</dbReference>
<dbReference type="Bgee" id="ENSG00000169413">
    <property type="expression patterns" value="Expressed in monocyte and 145 other cell types or tissues"/>
</dbReference>
<dbReference type="ExpressionAtlas" id="Q93091">
    <property type="expression patterns" value="baseline and differential"/>
</dbReference>
<dbReference type="GO" id="GO:0031410">
    <property type="term" value="C:cytoplasmic vesicle"/>
    <property type="evidence" value="ECO:0000314"/>
    <property type="project" value="UniProtKB"/>
</dbReference>
<dbReference type="GO" id="GO:0005576">
    <property type="term" value="C:extracellular region"/>
    <property type="evidence" value="ECO:0000304"/>
    <property type="project" value="Reactome"/>
</dbReference>
<dbReference type="GO" id="GO:0005615">
    <property type="term" value="C:extracellular space"/>
    <property type="evidence" value="ECO:0000314"/>
    <property type="project" value="UniProtKB"/>
</dbReference>
<dbReference type="GO" id="GO:0005764">
    <property type="term" value="C:lysosome"/>
    <property type="evidence" value="ECO:0007669"/>
    <property type="project" value="UniProtKB-SubCell"/>
</dbReference>
<dbReference type="GO" id="GO:0004519">
    <property type="term" value="F:endonuclease activity"/>
    <property type="evidence" value="ECO:0007669"/>
    <property type="project" value="UniProtKB-KW"/>
</dbReference>
<dbReference type="GO" id="GO:0003676">
    <property type="term" value="F:nucleic acid binding"/>
    <property type="evidence" value="ECO:0007669"/>
    <property type="project" value="InterPro"/>
</dbReference>
<dbReference type="GO" id="GO:0004540">
    <property type="term" value="F:RNA nuclease activity"/>
    <property type="evidence" value="ECO:0000314"/>
    <property type="project" value="UniProtKB"/>
</dbReference>
<dbReference type="GO" id="GO:0019731">
    <property type="term" value="P:antibacterial humoral response"/>
    <property type="evidence" value="ECO:0000314"/>
    <property type="project" value="UniProtKB"/>
</dbReference>
<dbReference type="GO" id="GO:0061844">
    <property type="term" value="P:antimicrobial humoral immune response mediated by antimicrobial peptide"/>
    <property type="evidence" value="ECO:0000314"/>
    <property type="project" value="UniProtKB"/>
</dbReference>
<dbReference type="GO" id="GO:0006952">
    <property type="term" value="P:defense response"/>
    <property type="evidence" value="ECO:0000304"/>
    <property type="project" value="ProtInc"/>
</dbReference>
<dbReference type="GO" id="GO:0050829">
    <property type="term" value="P:defense response to Gram-negative bacterium"/>
    <property type="evidence" value="ECO:0000314"/>
    <property type="project" value="UniProtKB"/>
</dbReference>
<dbReference type="GO" id="GO:0050830">
    <property type="term" value="P:defense response to Gram-positive bacterium"/>
    <property type="evidence" value="ECO:0000314"/>
    <property type="project" value="UniProtKB"/>
</dbReference>
<dbReference type="GO" id="GO:0051607">
    <property type="term" value="P:defense response to virus"/>
    <property type="evidence" value="ECO:0000314"/>
    <property type="project" value="UniProtKB"/>
</dbReference>
<dbReference type="GO" id="GO:0045087">
    <property type="term" value="P:innate immune response"/>
    <property type="evidence" value="ECO:0000314"/>
    <property type="project" value="UniProtKB"/>
</dbReference>
<dbReference type="GO" id="GO:0006401">
    <property type="term" value="P:RNA catabolic process"/>
    <property type="evidence" value="ECO:0000304"/>
    <property type="project" value="ProtInc"/>
</dbReference>
<dbReference type="CDD" id="cd06265">
    <property type="entry name" value="RNase_A_canonical"/>
    <property type="match status" value="1"/>
</dbReference>
<dbReference type="FunFam" id="3.10.130.10:FF:000001">
    <property type="entry name" value="Ribonuclease pancreatic"/>
    <property type="match status" value="1"/>
</dbReference>
<dbReference type="Gene3D" id="3.10.130.10">
    <property type="entry name" value="Ribonuclease A-like domain"/>
    <property type="match status" value="1"/>
</dbReference>
<dbReference type="InterPro" id="IPR001427">
    <property type="entry name" value="RNaseA"/>
</dbReference>
<dbReference type="InterPro" id="IPR036816">
    <property type="entry name" value="RNaseA-like_dom_sf"/>
</dbReference>
<dbReference type="InterPro" id="IPR023411">
    <property type="entry name" value="RNaseA_AS"/>
</dbReference>
<dbReference type="InterPro" id="IPR023412">
    <property type="entry name" value="RNaseA_domain"/>
</dbReference>
<dbReference type="PANTHER" id="PTHR11437">
    <property type="entry name" value="RIBONUCLEASE"/>
    <property type="match status" value="1"/>
</dbReference>
<dbReference type="PANTHER" id="PTHR11437:SF4">
    <property type="entry name" value="RIBONUCLEASE K6"/>
    <property type="match status" value="1"/>
</dbReference>
<dbReference type="Pfam" id="PF00074">
    <property type="entry name" value="RnaseA"/>
    <property type="match status" value="1"/>
</dbReference>
<dbReference type="PRINTS" id="PR00794">
    <property type="entry name" value="RIBONUCLEASE"/>
</dbReference>
<dbReference type="SMART" id="SM00092">
    <property type="entry name" value="RNAse_Pc"/>
    <property type="match status" value="1"/>
</dbReference>
<dbReference type="SUPFAM" id="SSF54076">
    <property type="entry name" value="RNase A-like"/>
    <property type="match status" value="1"/>
</dbReference>
<dbReference type="PROSITE" id="PS00127">
    <property type="entry name" value="RNASE_PANCREATIC"/>
    <property type="match status" value="1"/>
</dbReference>
<protein>
    <recommendedName>
        <fullName>Ribonuclease K6</fullName>
        <shortName>RNase K6</shortName>
        <ecNumber evidence="7 9">3.1.27.-</ecNumber>
    </recommendedName>
</protein>
<accession>Q93091</accession>
<proteinExistence type="evidence at protein level"/>
<evidence type="ECO:0000250" key="1"/>
<evidence type="ECO:0000250" key="2">
    <source>
        <dbReference type="UniProtKB" id="P81649"/>
    </source>
</evidence>
<evidence type="ECO:0000250" key="3">
    <source>
        <dbReference type="UniProtKB" id="Q64438"/>
    </source>
</evidence>
<evidence type="ECO:0000250" key="4">
    <source>
        <dbReference type="UniProtKB" id="Q9H1E1"/>
    </source>
</evidence>
<evidence type="ECO:0000255" key="5"/>
<evidence type="ECO:0000269" key="6">
    <source>
    </source>
</evidence>
<evidence type="ECO:0000269" key="7">
    <source>
    </source>
</evidence>
<evidence type="ECO:0000269" key="8">
    <source>
    </source>
</evidence>
<evidence type="ECO:0000269" key="9">
    <source>
    </source>
</evidence>
<evidence type="ECO:0000305" key="10"/>
<evidence type="ECO:0000305" key="11">
    <source>
    </source>
</evidence>
<evidence type="ECO:0007744" key="12">
    <source>
        <dbReference type="PDB" id="4X09"/>
    </source>
</evidence>
<evidence type="ECO:0007829" key="13">
    <source>
        <dbReference type="PDB" id="6ENP"/>
    </source>
</evidence>
<sequence>MVLCFPLLLLLLVLWGPVCPLHAWPKRLTKAHWFEIQHIQPSPLQCNRAMSGINNYTQHCKHQNTFLHDSFQNVAAVCDLLSIVCKNRRHNCHQSSKPVNMTDCRLTSGKYPQCRYSAAAQYKFFIVACDPPQKSDPPYKLVPVHLDSIL</sequence>
<reference key="1">
    <citation type="journal article" date="1996" name="Nucleic Acids Res.">
        <title>Molecular cloning and characterization of a novel human ribonuclease (RNase k6): increasing diversity in the enlarging ribonuclease gene family.</title>
        <authorList>
            <person name="Rosenberg H.F."/>
            <person name="Dyer K.D."/>
        </authorList>
    </citation>
    <scope>NUCLEOTIDE SEQUENCE [GENOMIC DNA]</scope>
    <scope>FUNCTION</scope>
    <scope>CATALYTIC ACTIVITY</scope>
    <scope>BIOPHYSICOCHEMICAL PROPERTIES</scope>
    <scope>TISSUE SPECIFICITY</scope>
</reference>
<reference key="2">
    <citation type="submission" date="1997-11" db="EMBL/GenBank/DDBJ databases">
        <authorList>
            <person name="Rosenberg H.F."/>
        </authorList>
    </citation>
    <scope>SEQUENCE REVISION TO 76</scope>
</reference>
<reference key="3">
    <citation type="journal article" date="2004" name="Genome Res.">
        <title>The status, quality, and expansion of the NIH full-length cDNA project: the Mammalian Gene Collection (MGC).</title>
        <authorList>
            <consortium name="The MGC Project Team"/>
        </authorList>
    </citation>
    <scope>NUCLEOTIDE SEQUENCE [LARGE SCALE MRNA]</scope>
    <source>
        <tissue>Placenta</tissue>
    </source>
</reference>
<reference key="4">
    <citation type="journal article" date="2015" name="Kidney Int.">
        <title>Ribonucleases 6 and 7 have antimicrobial function in the human and murine urinary tract.</title>
        <authorList>
            <person name="Becknell B."/>
            <person name="Eichler T.E."/>
            <person name="Beceiro S."/>
            <person name="Li B."/>
            <person name="Easterling R.S."/>
            <person name="Carpenter A.R."/>
            <person name="James C.L."/>
            <person name="McHugh K.M."/>
            <person name="Hains D.S."/>
            <person name="Partida-Sanchez S."/>
            <person name="Spencer J.D."/>
        </authorList>
    </citation>
    <scope>FUNCTION</scope>
    <scope>SUBCELLULAR LOCATION</scope>
    <scope>TISSUE SPECIFICITY</scope>
    <scope>INDUCTION</scope>
</reference>
<reference key="5">
    <citation type="journal article" date="2016" name="Int. J. Mol. Sci.">
        <title>Insights into the antimicrobial mechanism of action of human RNase6: structural determinants for bacterial cell agglutination and membrane permeation.</title>
        <authorList>
            <person name="Pulido D."/>
            <person name="Arranz-Trullen J."/>
            <person name="Prats-Ejarque G."/>
            <person name="Velazquez D."/>
            <person name="Torrent M."/>
            <person name="Moussaoui M."/>
            <person name="Boix E."/>
        </authorList>
    </citation>
    <scope>FUNCTION</scope>
    <scope>INTERACTION WITH LPS</scope>
    <scope>MUTAGENESIS OF TRP-24; ILE-36 AND HIS-38</scope>
</reference>
<reference evidence="12" key="6">
    <citation type="journal article" date="2016" name="Biochem. J.">
        <title>The first crystal structure of human RNase 6 reveals a novel substrate-binding and cleavage site arrangement.</title>
        <authorList>
            <person name="Prats-Ejarque G."/>
            <person name="Arranz-Trullen J."/>
            <person name="Blanco J.A."/>
            <person name="Pulido D."/>
            <person name="Nogues M.V."/>
            <person name="Moussaoui M."/>
            <person name="Boix E."/>
        </authorList>
    </citation>
    <scope>X-RAY CRYSTALLOGRAPHY (1.72 ANGSTROMS) OF 24-150</scope>
    <scope>FUNCTION</scope>
    <scope>CATALYTIC ACTIVITY</scope>
    <scope>BIOPHYSICOCHEMICAL PROPERTIES</scope>
    <scope>DISULFIDE BONDS</scope>
    <scope>MUTAGENESIS OF HIS-38 AND HIS-59</scope>
</reference>
<comment type="function">
    <text evidence="6 7 8 9">Ribonuclease which shows a preference for the pyrimidines uridine and cytosine (PubMed:27013146, PubMed:8836175). Has potent antibacterial activity against a range of Gram-positive and Gram-negative bacteria, including P.aeruginosa, A.baumanii, M.luteus, S.aureus, E.faecalis, E.faecium, S.saprophyticus and E.coli (PubMed:25075772, PubMed:27089320). Causes loss of bacterial membrane integrity, and also promotes agglutination of Gram-negative bacteria (PubMed:27089320). Probably contributes to urinary tract sterility (PubMed:25075772). Bactericidal activity is independent of RNase activity (PubMed:27089320).</text>
</comment>
<comment type="biophysicochemical properties">
    <kinetics>
        <KM evidence="9">5 uM for tRNA</KM>
        <KM evidence="7">2.63 mM for UpA dinucleotide</KM>
        <KM evidence="7">1.22 mM for CpA dinucleotide</KM>
        <KM evidence="7">2.06 mM for cytidine 2,3-cyclic phosphate</KM>
    </kinetics>
</comment>
<comment type="subunit">
    <text evidence="8">Interacts (via N-terminus) with bacterial lipopolysaccharide (LPS).</text>
</comment>
<comment type="subcellular location">
    <subcellularLocation>
        <location evidence="6">Secreted</location>
    </subcellularLocation>
    <subcellularLocation>
        <location evidence="11">Lysosome</location>
    </subcellularLocation>
    <subcellularLocation>
        <location evidence="6">Cytoplasmic granule</location>
    </subcellularLocation>
</comment>
<comment type="tissue specificity">
    <text evidence="6 9">Highly expressed in spleen (at protein level) (PubMed:25075772, PubMed:8836175). Has little or no expression in healthy kidneys (at protein level) (PubMed:25075772). Detected in interstitial leukocytes in infected kidneys (at protein level) (PubMed:25075772). Expressed in ureter where it localizes to urothelial and submucosal leukocytes (at protein level) (PubMed:25075772). Strong expression in lung and thymus, and lower expression in heart, placenta, pancreas, liver, brain and skeletal muscle (PubMed:25075772, PubMed:8836175). Also expressed in monocytes and neutrophils (PubMed:8836175).</text>
</comment>
<comment type="induction">
    <text evidence="6">Up-regulated in CD14+ monocytes in response to the uropathogenic E.coli strain CFT073.</text>
</comment>
<comment type="similarity">
    <text evidence="10">Belongs to the pancreatic ribonuclease family.</text>
</comment>
<organism>
    <name type="scientific">Homo sapiens</name>
    <name type="common">Human</name>
    <dbReference type="NCBI Taxonomy" id="9606"/>
    <lineage>
        <taxon>Eukaryota</taxon>
        <taxon>Metazoa</taxon>
        <taxon>Chordata</taxon>
        <taxon>Craniata</taxon>
        <taxon>Vertebrata</taxon>
        <taxon>Euteleostomi</taxon>
        <taxon>Mammalia</taxon>
        <taxon>Eutheria</taxon>
        <taxon>Euarchontoglires</taxon>
        <taxon>Primates</taxon>
        <taxon>Haplorrhini</taxon>
        <taxon>Catarrhini</taxon>
        <taxon>Hominidae</taxon>
        <taxon>Homo</taxon>
    </lineage>
</organism>